<name>HXB6B_TAKRU</name>
<dbReference type="EMBL" id="DQ481666">
    <property type="protein sequence ID" value="ABF22423.1"/>
    <property type="molecule type" value="Genomic_DNA"/>
</dbReference>
<dbReference type="SMR" id="Q1KKX1"/>
<dbReference type="FunCoup" id="Q1KKX1">
    <property type="interactions" value="381"/>
</dbReference>
<dbReference type="STRING" id="31033.ENSTRUP00000030235"/>
<dbReference type="Ensembl" id="ENSTRUT00000030352.3">
    <property type="protein sequence ID" value="ENSTRUP00000030235.2"/>
    <property type="gene ID" value="ENSTRUG00000011945.3"/>
</dbReference>
<dbReference type="GeneID" id="101079641"/>
<dbReference type="KEGG" id="tru:101079641"/>
<dbReference type="CTD" id="58053"/>
<dbReference type="eggNOG" id="KOG0489">
    <property type="taxonomic scope" value="Eukaryota"/>
</dbReference>
<dbReference type="GeneTree" id="ENSGT00940000165065"/>
<dbReference type="InParanoid" id="Q1KKX1"/>
<dbReference type="OMA" id="ACDYNPV"/>
<dbReference type="OrthoDB" id="6159439at2759"/>
<dbReference type="Proteomes" id="UP000005226">
    <property type="component" value="Chromosome 1"/>
</dbReference>
<dbReference type="GO" id="GO:0005634">
    <property type="term" value="C:nucleus"/>
    <property type="evidence" value="ECO:0007669"/>
    <property type="project" value="UniProtKB-SubCell"/>
</dbReference>
<dbReference type="GO" id="GO:0000981">
    <property type="term" value="F:DNA-binding transcription factor activity, RNA polymerase II-specific"/>
    <property type="evidence" value="ECO:0007669"/>
    <property type="project" value="InterPro"/>
</dbReference>
<dbReference type="GO" id="GO:0000978">
    <property type="term" value="F:RNA polymerase II cis-regulatory region sequence-specific DNA binding"/>
    <property type="evidence" value="ECO:0007669"/>
    <property type="project" value="TreeGrafter"/>
</dbReference>
<dbReference type="GO" id="GO:0009952">
    <property type="term" value="P:anterior/posterior pattern specification"/>
    <property type="evidence" value="ECO:0007669"/>
    <property type="project" value="TreeGrafter"/>
</dbReference>
<dbReference type="CDD" id="cd00086">
    <property type="entry name" value="homeodomain"/>
    <property type="match status" value="1"/>
</dbReference>
<dbReference type="FunFam" id="1.10.10.60:FF:000017">
    <property type="entry name" value="Homeobox protein antennapedia"/>
    <property type="match status" value="1"/>
</dbReference>
<dbReference type="Gene3D" id="1.10.10.60">
    <property type="entry name" value="Homeodomain-like"/>
    <property type="match status" value="1"/>
</dbReference>
<dbReference type="InterPro" id="IPR050296">
    <property type="entry name" value="Antp_homeobox"/>
</dbReference>
<dbReference type="InterPro" id="IPR001356">
    <property type="entry name" value="HD"/>
</dbReference>
<dbReference type="InterPro" id="IPR020479">
    <property type="entry name" value="HD_metazoa"/>
</dbReference>
<dbReference type="InterPro" id="IPR017995">
    <property type="entry name" value="Homeobox_antennapedia"/>
</dbReference>
<dbReference type="InterPro" id="IPR001827">
    <property type="entry name" value="Homeobox_Antennapedia_CS"/>
</dbReference>
<dbReference type="InterPro" id="IPR017970">
    <property type="entry name" value="Homeobox_CS"/>
</dbReference>
<dbReference type="InterPro" id="IPR009057">
    <property type="entry name" value="Homeodomain-like_sf"/>
</dbReference>
<dbReference type="PANTHER" id="PTHR45659">
    <property type="entry name" value="HOMEOBOX PROTEIN HOX"/>
    <property type="match status" value="1"/>
</dbReference>
<dbReference type="PANTHER" id="PTHR45659:SF10">
    <property type="entry name" value="HOMEOBOX PROTEIN HOX-A5"/>
    <property type="match status" value="1"/>
</dbReference>
<dbReference type="Pfam" id="PF00046">
    <property type="entry name" value="Homeodomain"/>
    <property type="match status" value="1"/>
</dbReference>
<dbReference type="PRINTS" id="PR00025">
    <property type="entry name" value="ANTENNAPEDIA"/>
</dbReference>
<dbReference type="PRINTS" id="PR00024">
    <property type="entry name" value="HOMEOBOX"/>
</dbReference>
<dbReference type="SMART" id="SM00389">
    <property type="entry name" value="HOX"/>
    <property type="match status" value="1"/>
</dbReference>
<dbReference type="SUPFAM" id="SSF46689">
    <property type="entry name" value="Homeodomain-like"/>
    <property type="match status" value="1"/>
</dbReference>
<dbReference type="PROSITE" id="PS00032">
    <property type="entry name" value="ANTENNAPEDIA"/>
    <property type="match status" value="1"/>
</dbReference>
<dbReference type="PROSITE" id="PS00027">
    <property type="entry name" value="HOMEOBOX_1"/>
    <property type="match status" value="1"/>
</dbReference>
<dbReference type="PROSITE" id="PS50071">
    <property type="entry name" value="HOMEOBOX_2"/>
    <property type="match status" value="1"/>
</dbReference>
<comment type="function">
    <text evidence="1">Sequence-specific transcription factor which is part of a developmental regulatory system that provides cells with specific positional identities on the anterior-posterior axis.</text>
</comment>
<comment type="subcellular location">
    <subcellularLocation>
        <location evidence="2">Nucleus</location>
    </subcellularLocation>
</comment>
<comment type="similarity">
    <text evidence="4">Belongs to the Antp homeobox family.</text>
</comment>
<evidence type="ECO:0000250" key="1"/>
<evidence type="ECO:0000255" key="2">
    <source>
        <dbReference type="PROSITE-ProRule" id="PRU00108"/>
    </source>
</evidence>
<evidence type="ECO:0000256" key="3">
    <source>
        <dbReference type="SAM" id="MobiDB-lite"/>
    </source>
</evidence>
<evidence type="ECO:0000305" key="4"/>
<accession>Q1KKX1</accession>
<proteinExistence type="inferred from homology"/>
<keyword id="KW-0217">Developmental protein</keyword>
<keyword id="KW-0238">DNA-binding</keyword>
<keyword id="KW-0371">Homeobox</keyword>
<keyword id="KW-0539">Nucleus</keyword>
<keyword id="KW-1185">Reference proteome</keyword>
<keyword id="KW-0804">Transcription</keyword>
<keyword id="KW-0805">Transcription regulation</keyword>
<feature type="chain" id="PRO_0000265982" description="Homeobox protein Hox-B6b">
    <location>
        <begin position="1"/>
        <end position="233"/>
    </location>
</feature>
<feature type="DNA-binding region" description="Homeobox" evidence="2">
    <location>
        <begin position="155"/>
        <end position="214"/>
    </location>
</feature>
<feature type="region of interest" description="Disordered" evidence="3">
    <location>
        <begin position="213"/>
        <end position="233"/>
    </location>
</feature>
<feature type="short sequence motif" description="Antp-type hexapeptide">
    <location>
        <begin position="136"/>
        <end position="141"/>
    </location>
</feature>
<feature type="compositionally biased region" description="Acidic residues" evidence="3">
    <location>
        <begin position="224"/>
        <end position="233"/>
    </location>
</feature>
<protein>
    <recommendedName>
        <fullName>Homeobox protein Hox-B6b</fullName>
    </recommendedName>
</protein>
<reference key="1">
    <citation type="journal article" date="2006" name="Proc. Natl. Acad. Sci. U.S.A.">
        <title>Highly conserved syntenic blocks at the vertebrate Hox loci and conserved regulatory elements within and outside Hox gene clusters.</title>
        <authorList>
            <person name="Lee A.P."/>
            <person name="Koh E.G.L."/>
            <person name="Tay A."/>
            <person name="Brenner S."/>
            <person name="Venkatesh B."/>
        </authorList>
    </citation>
    <scope>NUCLEOTIDE SEQUENCE [GENOMIC DNA]</scope>
</reference>
<sequence>MSSYFVNSTFPVSLPGGQDSLLGQIPLYSSGYTDPLRHYSNAATYGAANMQEKVYPASYYQQTGAAAIYGRAGGGAPCEYNPVGTFYKETEGSCAFSSRDDQPLFVTQEHQQRKVECPEQSVSMGSSIDDKSSTLIYPWMQRMNACSAGPFGNSGRRGRQTYTRYQTLELEKEFHFNRYLTRRRRIEISHALCLTERQIKIWFQNRRMKWKKENKLLNPSKTPEEEEEAEKKS</sequence>
<organism>
    <name type="scientific">Takifugu rubripes</name>
    <name type="common">Japanese pufferfish</name>
    <name type="synonym">Fugu rubripes</name>
    <dbReference type="NCBI Taxonomy" id="31033"/>
    <lineage>
        <taxon>Eukaryota</taxon>
        <taxon>Metazoa</taxon>
        <taxon>Chordata</taxon>
        <taxon>Craniata</taxon>
        <taxon>Vertebrata</taxon>
        <taxon>Euteleostomi</taxon>
        <taxon>Actinopterygii</taxon>
        <taxon>Neopterygii</taxon>
        <taxon>Teleostei</taxon>
        <taxon>Neoteleostei</taxon>
        <taxon>Acanthomorphata</taxon>
        <taxon>Eupercaria</taxon>
        <taxon>Tetraodontiformes</taxon>
        <taxon>Tetradontoidea</taxon>
        <taxon>Tetraodontidae</taxon>
        <taxon>Takifugu</taxon>
    </lineage>
</organism>
<gene>
    <name type="primary">hoxb6b</name>
</gene>